<evidence type="ECO:0000255" key="1">
    <source>
        <dbReference type="HAMAP-Rule" id="MF_00518"/>
    </source>
</evidence>
<organism>
    <name type="scientific">Streptococcus pneumoniae (strain JJA)</name>
    <dbReference type="NCBI Taxonomy" id="488222"/>
    <lineage>
        <taxon>Bacteria</taxon>
        <taxon>Bacillati</taxon>
        <taxon>Bacillota</taxon>
        <taxon>Bacilli</taxon>
        <taxon>Lactobacillales</taxon>
        <taxon>Streptococcaceae</taxon>
        <taxon>Streptococcus</taxon>
    </lineage>
</organism>
<proteinExistence type="inferred from homology"/>
<keyword id="KW-0963">Cytoplasm</keyword>
<keyword id="KW-0378">Hydrolase</keyword>
<keyword id="KW-0694">RNA-binding</keyword>
<keyword id="KW-0820">tRNA-binding</keyword>
<feature type="chain" id="PRO_1000146216" description="D-aminoacyl-tRNA deacylase">
    <location>
        <begin position="1"/>
        <end position="147"/>
    </location>
</feature>
<feature type="short sequence motif" description="Gly-cisPro motif, important for rejection of L-amino acids" evidence="1">
    <location>
        <begin position="136"/>
        <end position="137"/>
    </location>
</feature>
<comment type="function">
    <text evidence="1">An aminoacyl-tRNA editing enzyme that deacylates mischarged D-aminoacyl-tRNAs. Also deacylates mischarged glycyl-tRNA(Ala), protecting cells against glycine mischarging by AlaRS. Acts via tRNA-based rather than protein-based catalysis; rejects L-amino acids rather than detecting D-amino acids in the active site. By recycling D-aminoacyl-tRNA to D-amino acids and free tRNA molecules, this enzyme counteracts the toxicity associated with the formation of D-aminoacyl-tRNA entities in vivo and helps enforce protein L-homochirality.</text>
</comment>
<comment type="catalytic activity">
    <reaction evidence="1">
        <text>glycyl-tRNA(Ala) + H2O = tRNA(Ala) + glycine + H(+)</text>
        <dbReference type="Rhea" id="RHEA:53744"/>
        <dbReference type="Rhea" id="RHEA-COMP:9657"/>
        <dbReference type="Rhea" id="RHEA-COMP:13640"/>
        <dbReference type="ChEBI" id="CHEBI:15377"/>
        <dbReference type="ChEBI" id="CHEBI:15378"/>
        <dbReference type="ChEBI" id="CHEBI:57305"/>
        <dbReference type="ChEBI" id="CHEBI:78442"/>
        <dbReference type="ChEBI" id="CHEBI:78522"/>
        <dbReference type="EC" id="3.1.1.96"/>
    </reaction>
</comment>
<comment type="catalytic activity">
    <reaction evidence="1">
        <text>a D-aminoacyl-tRNA + H2O = a tRNA + a D-alpha-amino acid + H(+)</text>
        <dbReference type="Rhea" id="RHEA:13953"/>
        <dbReference type="Rhea" id="RHEA-COMP:10123"/>
        <dbReference type="Rhea" id="RHEA-COMP:10124"/>
        <dbReference type="ChEBI" id="CHEBI:15377"/>
        <dbReference type="ChEBI" id="CHEBI:15378"/>
        <dbReference type="ChEBI" id="CHEBI:59871"/>
        <dbReference type="ChEBI" id="CHEBI:78442"/>
        <dbReference type="ChEBI" id="CHEBI:79333"/>
        <dbReference type="EC" id="3.1.1.96"/>
    </reaction>
</comment>
<comment type="subunit">
    <text evidence="1">Homodimer.</text>
</comment>
<comment type="subcellular location">
    <subcellularLocation>
        <location evidence="1">Cytoplasm</location>
    </subcellularLocation>
</comment>
<comment type="domain">
    <text evidence="1">A Gly-cisPro motif from one monomer fits into the active site of the other monomer to allow specific chiral rejection of L-amino acids.</text>
</comment>
<comment type="similarity">
    <text evidence="1">Belongs to the DTD family.</text>
</comment>
<dbReference type="EC" id="3.1.1.96" evidence="1"/>
<dbReference type="EMBL" id="CP000919">
    <property type="protein sequence ID" value="ACO18102.1"/>
    <property type="molecule type" value="Genomic_DNA"/>
</dbReference>
<dbReference type="RefSeq" id="WP_000691400.1">
    <property type="nucleotide sequence ID" value="NC_012466.1"/>
</dbReference>
<dbReference type="SMR" id="C1CFL4"/>
<dbReference type="GeneID" id="45653142"/>
<dbReference type="KEGG" id="sjj:SPJ_1538"/>
<dbReference type="HOGENOM" id="CLU_076901_1_0_9"/>
<dbReference type="Proteomes" id="UP000002206">
    <property type="component" value="Chromosome"/>
</dbReference>
<dbReference type="GO" id="GO:0005737">
    <property type="term" value="C:cytoplasm"/>
    <property type="evidence" value="ECO:0007669"/>
    <property type="project" value="UniProtKB-SubCell"/>
</dbReference>
<dbReference type="GO" id="GO:0051500">
    <property type="term" value="F:D-tyrosyl-tRNA(Tyr) deacylase activity"/>
    <property type="evidence" value="ECO:0007669"/>
    <property type="project" value="TreeGrafter"/>
</dbReference>
<dbReference type="GO" id="GO:0106026">
    <property type="term" value="F:Gly-tRNA(Ala) deacylase activity"/>
    <property type="evidence" value="ECO:0007669"/>
    <property type="project" value="UniProtKB-UniRule"/>
</dbReference>
<dbReference type="GO" id="GO:0043908">
    <property type="term" value="F:Ser(Gly)-tRNA(Ala) hydrolase activity"/>
    <property type="evidence" value="ECO:0007669"/>
    <property type="project" value="UniProtKB-UniRule"/>
</dbReference>
<dbReference type="GO" id="GO:0000049">
    <property type="term" value="F:tRNA binding"/>
    <property type="evidence" value="ECO:0007669"/>
    <property type="project" value="UniProtKB-UniRule"/>
</dbReference>
<dbReference type="GO" id="GO:0019478">
    <property type="term" value="P:D-amino acid catabolic process"/>
    <property type="evidence" value="ECO:0007669"/>
    <property type="project" value="UniProtKB-UniRule"/>
</dbReference>
<dbReference type="CDD" id="cd00563">
    <property type="entry name" value="Dtyr_deacylase"/>
    <property type="match status" value="1"/>
</dbReference>
<dbReference type="FunFam" id="3.50.80.10:FF:000001">
    <property type="entry name" value="D-aminoacyl-tRNA deacylase"/>
    <property type="match status" value="1"/>
</dbReference>
<dbReference type="Gene3D" id="3.50.80.10">
    <property type="entry name" value="D-tyrosyl-tRNA(Tyr) deacylase"/>
    <property type="match status" value="1"/>
</dbReference>
<dbReference type="HAMAP" id="MF_00518">
    <property type="entry name" value="Deacylase_Dtd"/>
    <property type="match status" value="1"/>
</dbReference>
<dbReference type="InterPro" id="IPR003732">
    <property type="entry name" value="Daa-tRNA_deacyls_DTD"/>
</dbReference>
<dbReference type="InterPro" id="IPR023509">
    <property type="entry name" value="DTD-like_sf"/>
</dbReference>
<dbReference type="NCBIfam" id="TIGR00256">
    <property type="entry name" value="D-aminoacyl-tRNA deacylase"/>
    <property type="match status" value="1"/>
</dbReference>
<dbReference type="PANTHER" id="PTHR10472:SF5">
    <property type="entry name" value="D-AMINOACYL-TRNA DEACYLASE 1"/>
    <property type="match status" value="1"/>
</dbReference>
<dbReference type="PANTHER" id="PTHR10472">
    <property type="entry name" value="D-TYROSYL-TRNA TYR DEACYLASE"/>
    <property type="match status" value="1"/>
</dbReference>
<dbReference type="Pfam" id="PF02580">
    <property type="entry name" value="Tyr_Deacylase"/>
    <property type="match status" value="1"/>
</dbReference>
<dbReference type="SUPFAM" id="SSF69500">
    <property type="entry name" value="DTD-like"/>
    <property type="match status" value="1"/>
</dbReference>
<name>DTD_STRZJ</name>
<accession>C1CFL4</accession>
<sequence length="147" mass="16214">MKIIIQRVKKAQVSIEGQIQGKINQGLLLLVGVGPEDQEEDLDYAVRKLVNMRIFSDAEGKMNLSVKDIEGEILSISQFTLFADTKKGNRPAFTGAAKPDMASDFYDAFNQKLAQEVPVQTGIFGADMQVELVNNGPVTIILDTKKR</sequence>
<reference key="1">
    <citation type="journal article" date="2010" name="Genome Biol.">
        <title>Structure and dynamics of the pan-genome of Streptococcus pneumoniae and closely related species.</title>
        <authorList>
            <person name="Donati C."/>
            <person name="Hiller N.L."/>
            <person name="Tettelin H."/>
            <person name="Muzzi A."/>
            <person name="Croucher N.J."/>
            <person name="Angiuoli S.V."/>
            <person name="Oggioni M."/>
            <person name="Dunning Hotopp J.C."/>
            <person name="Hu F.Z."/>
            <person name="Riley D.R."/>
            <person name="Covacci A."/>
            <person name="Mitchell T.J."/>
            <person name="Bentley S.D."/>
            <person name="Kilian M."/>
            <person name="Ehrlich G.D."/>
            <person name="Rappuoli R."/>
            <person name="Moxon E.R."/>
            <person name="Masignani V."/>
        </authorList>
    </citation>
    <scope>NUCLEOTIDE SEQUENCE [LARGE SCALE GENOMIC DNA]</scope>
    <source>
        <strain>JJA</strain>
    </source>
</reference>
<protein>
    <recommendedName>
        <fullName evidence="1">D-aminoacyl-tRNA deacylase</fullName>
        <shortName evidence="1">DTD</shortName>
        <ecNumber evidence="1">3.1.1.96</ecNumber>
    </recommendedName>
    <alternativeName>
        <fullName evidence="1">Gly-tRNA(Ala) deacylase</fullName>
    </alternativeName>
</protein>
<gene>
    <name evidence="1" type="primary">dtd</name>
    <name type="ordered locus">SPJ_1538</name>
</gene>